<dbReference type="EC" id="6.3.5.2" evidence="1"/>
<dbReference type="EMBL" id="CP000926">
    <property type="protein sequence ID" value="ABY96940.1"/>
    <property type="molecule type" value="Genomic_DNA"/>
</dbReference>
<dbReference type="RefSeq" id="WP_012270724.1">
    <property type="nucleotide sequence ID" value="NC_010322.1"/>
</dbReference>
<dbReference type="SMR" id="B0KRE6"/>
<dbReference type="MEROPS" id="C26.957"/>
<dbReference type="KEGG" id="ppg:PputGB1_1030"/>
<dbReference type="eggNOG" id="COG0518">
    <property type="taxonomic scope" value="Bacteria"/>
</dbReference>
<dbReference type="eggNOG" id="COG0519">
    <property type="taxonomic scope" value="Bacteria"/>
</dbReference>
<dbReference type="HOGENOM" id="CLU_014340_0_5_6"/>
<dbReference type="UniPathway" id="UPA00189">
    <property type="reaction ID" value="UER00296"/>
</dbReference>
<dbReference type="Proteomes" id="UP000002157">
    <property type="component" value="Chromosome"/>
</dbReference>
<dbReference type="GO" id="GO:0005829">
    <property type="term" value="C:cytosol"/>
    <property type="evidence" value="ECO:0007669"/>
    <property type="project" value="TreeGrafter"/>
</dbReference>
<dbReference type="GO" id="GO:0005524">
    <property type="term" value="F:ATP binding"/>
    <property type="evidence" value="ECO:0007669"/>
    <property type="project" value="UniProtKB-UniRule"/>
</dbReference>
<dbReference type="GO" id="GO:0003921">
    <property type="term" value="F:GMP synthase activity"/>
    <property type="evidence" value="ECO:0007669"/>
    <property type="project" value="InterPro"/>
</dbReference>
<dbReference type="CDD" id="cd01742">
    <property type="entry name" value="GATase1_GMP_Synthase"/>
    <property type="match status" value="1"/>
</dbReference>
<dbReference type="CDD" id="cd01997">
    <property type="entry name" value="GMP_synthase_C"/>
    <property type="match status" value="1"/>
</dbReference>
<dbReference type="FunFam" id="3.30.300.10:FF:000002">
    <property type="entry name" value="GMP synthase [glutamine-hydrolyzing]"/>
    <property type="match status" value="1"/>
</dbReference>
<dbReference type="FunFam" id="3.40.50.620:FF:000001">
    <property type="entry name" value="GMP synthase [glutamine-hydrolyzing]"/>
    <property type="match status" value="1"/>
</dbReference>
<dbReference type="FunFam" id="3.40.50.880:FF:000001">
    <property type="entry name" value="GMP synthase [glutamine-hydrolyzing]"/>
    <property type="match status" value="1"/>
</dbReference>
<dbReference type="Gene3D" id="3.30.300.10">
    <property type="match status" value="1"/>
</dbReference>
<dbReference type="Gene3D" id="3.40.50.880">
    <property type="match status" value="1"/>
</dbReference>
<dbReference type="Gene3D" id="3.40.50.620">
    <property type="entry name" value="HUPs"/>
    <property type="match status" value="1"/>
</dbReference>
<dbReference type="HAMAP" id="MF_00344">
    <property type="entry name" value="GMP_synthase"/>
    <property type="match status" value="1"/>
</dbReference>
<dbReference type="InterPro" id="IPR029062">
    <property type="entry name" value="Class_I_gatase-like"/>
</dbReference>
<dbReference type="InterPro" id="IPR017926">
    <property type="entry name" value="GATASE"/>
</dbReference>
<dbReference type="InterPro" id="IPR001674">
    <property type="entry name" value="GMP_synth_C"/>
</dbReference>
<dbReference type="InterPro" id="IPR004739">
    <property type="entry name" value="GMP_synth_GATase"/>
</dbReference>
<dbReference type="InterPro" id="IPR022955">
    <property type="entry name" value="GMP_synthase"/>
</dbReference>
<dbReference type="InterPro" id="IPR025777">
    <property type="entry name" value="GMPS_ATP_PPase_dom"/>
</dbReference>
<dbReference type="InterPro" id="IPR022310">
    <property type="entry name" value="NAD/GMP_synthase"/>
</dbReference>
<dbReference type="InterPro" id="IPR014729">
    <property type="entry name" value="Rossmann-like_a/b/a_fold"/>
</dbReference>
<dbReference type="NCBIfam" id="TIGR00884">
    <property type="entry name" value="guaA_Cterm"/>
    <property type="match status" value="1"/>
</dbReference>
<dbReference type="NCBIfam" id="TIGR00888">
    <property type="entry name" value="guaA_Nterm"/>
    <property type="match status" value="1"/>
</dbReference>
<dbReference type="NCBIfam" id="NF000848">
    <property type="entry name" value="PRK00074.1"/>
    <property type="match status" value="1"/>
</dbReference>
<dbReference type="PANTHER" id="PTHR11922:SF2">
    <property type="entry name" value="GMP SYNTHASE [GLUTAMINE-HYDROLYZING]"/>
    <property type="match status" value="1"/>
</dbReference>
<dbReference type="PANTHER" id="PTHR11922">
    <property type="entry name" value="GMP SYNTHASE-RELATED"/>
    <property type="match status" value="1"/>
</dbReference>
<dbReference type="Pfam" id="PF00117">
    <property type="entry name" value="GATase"/>
    <property type="match status" value="1"/>
</dbReference>
<dbReference type="Pfam" id="PF00958">
    <property type="entry name" value="GMP_synt_C"/>
    <property type="match status" value="1"/>
</dbReference>
<dbReference type="Pfam" id="PF02540">
    <property type="entry name" value="NAD_synthase"/>
    <property type="match status" value="1"/>
</dbReference>
<dbReference type="PRINTS" id="PR00097">
    <property type="entry name" value="ANTSNTHASEII"/>
</dbReference>
<dbReference type="PRINTS" id="PR00096">
    <property type="entry name" value="GATASE"/>
</dbReference>
<dbReference type="SUPFAM" id="SSF52402">
    <property type="entry name" value="Adenine nucleotide alpha hydrolases-like"/>
    <property type="match status" value="1"/>
</dbReference>
<dbReference type="SUPFAM" id="SSF52317">
    <property type="entry name" value="Class I glutamine amidotransferase-like"/>
    <property type="match status" value="1"/>
</dbReference>
<dbReference type="SUPFAM" id="SSF54810">
    <property type="entry name" value="GMP synthetase C-terminal dimerisation domain"/>
    <property type="match status" value="1"/>
</dbReference>
<dbReference type="PROSITE" id="PS51273">
    <property type="entry name" value="GATASE_TYPE_1"/>
    <property type="match status" value="1"/>
</dbReference>
<dbReference type="PROSITE" id="PS51553">
    <property type="entry name" value="GMPS_ATP_PPASE"/>
    <property type="match status" value="1"/>
</dbReference>
<name>GUAA_PSEPG</name>
<feature type="chain" id="PRO_1000120371" description="GMP synthase [glutamine-hydrolyzing]">
    <location>
        <begin position="1"/>
        <end position="525"/>
    </location>
</feature>
<feature type="domain" description="Glutamine amidotransferase type-1" evidence="1">
    <location>
        <begin position="9"/>
        <end position="207"/>
    </location>
</feature>
<feature type="domain" description="GMPS ATP-PPase" evidence="1">
    <location>
        <begin position="208"/>
        <end position="400"/>
    </location>
</feature>
<feature type="active site" description="Nucleophile" evidence="1">
    <location>
        <position position="86"/>
    </location>
</feature>
<feature type="active site" evidence="1">
    <location>
        <position position="181"/>
    </location>
</feature>
<feature type="active site" evidence="1">
    <location>
        <position position="183"/>
    </location>
</feature>
<feature type="binding site" evidence="1">
    <location>
        <begin position="235"/>
        <end position="241"/>
    </location>
    <ligand>
        <name>ATP</name>
        <dbReference type="ChEBI" id="CHEBI:30616"/>
    </ligand>
</feature>
<accession>B0KRE6</accession>
<sequence length="525" mass="58190">MALDIHAHRILILDFGSQYTQLIARRVREIGVYCELHPFDMDDEAIREFNPRGIILAGGPESVHEANSPRAPQAVFDLNVPVLGICYGMQTMAEQMGGKVEGSDLREFGYARVDVVGKSRLLDGIEDHVDDDGVLGLDVWMSHGDKVTQMPGNFNILASTPSCPIAGMYDDARGYYGVQFHPEVTHTKQGGRILSRFVQDICGCEALWTASNIVEDAIAQVRAQVGSANVLLGLSGGVDSSVVAALLHRAIGDQLTCVFVDNGLLRLHEGDQVMAMFKENMGVKVIRADAEKQFLDNLEGEADPEKKRKIIGRTFIDIFDAEASKLENIQFLAQGTIYPDVIESAGAKSGKAHVIKSHHNVGGLPEEMNLKLVEPLRELFKDEVRKIGLELGLPYDMVYRHPFPGPGLGVRILGEVKKEYADILRRADHIFIEELRKADWYHKTSQAFVVFQPVKSVGVVGDGRRYAWVVALRAVETVDFMTARWAHLPYELLETVSGRIINEIDGISRVTYDVSSKPPATIEWE</sequence>
<reference key="1">
    <citation type="submission" date="2008-01" db="EMBL/GenBank/DDBJ databases">
        <title>Complete sequence of Pseudomonas putida GB-1.</title>
        <authorList>
            <consortium name="US DOE Joint Genome Institute"/>
            <person name="Copeland A."/>
            <person name="Lucas S."/>
            <person name="Lapidus A."/>
            <person name="Barry K."/>
            <person name="Glavina del Rio T."/>
            <person name="Dalin E."/>
            <person name="Tice H."/>
            <person name="Pitluck S."/>
            <person name="Bruce D."/>
            <person name="Goodwin L."/>
            <person name="Chertkov O."/>
            <person name="Brettin T."/>
            <person name="Detter J.C."/>
            <person name="Han C."/>
            <person name="Kuske C.R."/>
            <person name="Schmutz J."/>
            <person name="Larimer F."/>
            <person name="Land M."/>
            <person name="Hauser L."/>
            <person name="Kyrpides N."/>
            <person name="Kim E."/>
            <person name="McCarthy J.K."/>
            <person name="Richardson P."/>
        </authorList>
    </citation>
    <scope>NUCLEOTIDE SEQUENCE [LARGE SCALE GENOMIC DNA]</scope>
    <source>
        <strain>GB-1</strain>
    </source>
</reference>
<comment type="function">
    <text evidence="1">Catalyzes the synthesis of GMP from XMP.</text>
</comment>
<comment type="catalytic activity">
    <reaction evidence="1">
        <text>XMP + L-glutamine + ATP + H2O = GMP + L-glutamate + AMP + diphosphate + 2 H(+)</text>
        <dbReference type="Rhea" id="RHEA:11680"/>
        <dbReference type="ChEBI" id="CHEBI:15377"/>
        <dbReference type="ChEBI" id="CHEBI:15378"/>
        <dbReference type="ChEBI" id="CHEBI:29985"/>
        <dbReference type="ChEBI" id="CHEBI:30616"/>
        <dbReference type="ChEBI" id="CHEBI:33019"/>
        <dbReference type="ChEBI" id="CHEBI:57464"/>
        <dbReference type="ChEBI" id="CHEBI:58115"/>
        <dbReference type="ChEBI" id="CHEBI:58359"/>
        <dbReference type="ChEBI" id="CHEBI:456215"/>
        <dbReference type="EC" id="6.3.5.2"/>
    </reaction>
</comment>
<comment type="pathway">
    <text evidence="1">Purine metabolism; GMP biosynthesis; GMP from XMP (L-Gln route): step 1/1.</text>
</comment>
<comment type="subunit">
    <text evidence="1">Homodimer.</text>
</comment>
<organism>
    <name type="scientific">Pseudomonas putida (strain GB-1)</name>
    <dbReference type="NCBI Taxonomy" id="76869"/>
    <lineage>
        <taxon>Bacteria</taxon>
        <taxon>Pseudomonadati</taxon>
        <taxon>Pseudomonadota</taxon>
        <taxon>Gammaproteobacteria</taxon>
        <taxon>Pseudomonadales</taxon>
        <taxon>Pseudomonadaceae</taxon>
        <taxon>Pseudomonas</taxon>
    </lineage>
</organism>
<gene>
    <name evidence="1" type="primary">guaA</name>
    <name type="ordered locus">PputGB1_1030</name>
</gene>
<keyword id="KW-0067">ATP-binding</keyword>
<keyword id="KW-0315">Glutamine amidotransferase</keyword>
<keyword id="KW-0332">GMP biosynthesis</keyword>
<keyword id="KW-0436">Ligase</keyword>
<keyword id="KW-0547">Nucleotide-binding</keyword>
<keyword id="KW-0658">Purine biosynthesis</keyword>
<proteinExistence type="inferred from homology"/>
<evidence type="ECO:0000255" key="1">
    <source>
        <dbReference type="HAMAP-Rule" id="MF_00344"/>
    </source>
</evidence>
<protein>
    <recommendedName>
        <fullName evidence="1">GMP synthase [glutamine-hydrolyzing]</fullName>
        <ecNumber evidence="1">6.3.5.2</ecNumber>
    </recommendedName>
    <alternativeName>
        <fullName evidence="1">GMP synthetase</fullName>
    </alternativeName>
    <alternativeName>
        <fullName evidence="1">Glutamine amidotransferase</fullName>
    </alternativeName>
</protein>